<accession>Q9KMG5</accession>
<name>HIGB1_VIBCH</name>
<gene>
    <name type="primary">higB-1</name>
    <name type="ordered locus">VC_A0391</name>
</gene>
<comment type="function">
    <text evidence="1 2">Toxic component of a type II toxin-antitoxin (TA) system. Inhibits translation by cleavage of mRNA.</text>
</comment>
<comment type="induction">
    <text evidence="1 2">Induced by amino acid starvation. Induced by the protein synthesis inhibitors chloramphenicol, kanamycin and to a lesser extent by spectinomycin.</text>
</comment>
<comment type="miscellaneous">
    <text>HigB-1/HigA-1 has been shown to stabilize plasmids very efficiently in E.coli. Three hours of ectopic expression of higB-1 results in bacteriostasis without any detectable loss of viability.</text>
</comment>
<comment type="sequence caution" evidence="3">
    <conflict type="erroneous initiation">
        <sequence resource="EMBL-CDS" id="AAF96297"/>
    </conflict>
    <text>Extended N-terminus.</text>
</comment>
<proteinExistence type="evidence at protein level"/>
<keyword id="KW-1185">Reference proteome</keyword>
<keyword id="KW-1277">Toxin-antitoxin system</keyword>
<dbReference type="EMBL" id="AE003853">
    <property type="protein sequence ID" value="AAF96297.1"/>
    <property type="status" value="ALT_INIT"/>
    <property type="molecule type" value="Genomic_DNA"/>
</dbReference>
<dbReference type="PIR" id="D82467">
    <property type="entry name" value="D82467"/>
</dbReference>
<dbReference type="RefSeq" id="NP_232785.1">
    <property type="nucleotide sequence ID" value="NC_002506.1"/>
</dbReference>
<dbReference type="RefSeq" id="WP_001162670.1">
    <property type="nucleotide sequence ID" value="NZ_LT906615.1"/>
</dbReference>
<dbReference type="SMR" id="Q9KMG5"/>
<dbReference type="STRING" id="243277.VC_A0391"/>
<dbReference type="DNASU" id="2612447"/>
<dbReference type="EnsemblBacteria" id="AAF96297">
    <property type="protein sequence ID" value="AAF96297"/>
    <property type="gene ID" value="VC_A0391"/>
</dbReference>
<dbReference type="KEGG" id="vch:VC_A0391"/>
<dbReference type="PATRIC" id="fig|243277.26.peg.3021"/>
<dbReference type="eggNOG" id="COG3549">
    <property type="taxonomic scope" value="Bacteria"/>
</dbReference>
<dbReference type="HOGENOM" id="CLU_155111_1_0_6"/>
<dbReference type="Proteomes" id="UP000000584">
    <property type="component" value="Chromosome 2"/>
</dbReference>
<dbReference type="FunFam" id="3.30.2310.20:FF:000009">
    <property type="entry name" value="HigB toxin protein"/>
    <property type="match status" value="1"/>
</dbReference>
<dbReference type="Gene3D" id="3.30.2310.20">
    <property type="entry name" value="RelE-like"/>
    <property type="match status" value="1"/>
</dbReference>
<dbReference type="InterPro" id="IPR007711">
    <property type="entry name" value="HigB-1"/>
</dbReference>
<dbReference type="InterPro" id="IPR035093">
    <property type="entry name" value="RelE/ParE_toxin_dom_sf"/>
</dbReference>
<dbReference type="PANTHER" id="PTHR40266">
    <property type="entry name" value="TOXIN HIGB-1"/>
    <property type="match status" value="1"/>
</dbReference>
<dbReference type="PANTHER" id="PTHR40266:SF2">
    <property type="entry name" value="TOXIN HIGB-1"/>
    <property type="match status" value="1"/>
</dbReference>
<dbReference type="Pfam" id="PF05015">
    <property type="entry name" value="HigB-like_toxin"/>
    <property type="match status" value="1"/>
</dbReference>
<dbReference type="SUPFAM" id="SSF143011">
    <property type="entry name" value="RelE-like"/>
    <property type="match status" value="1"/>
</dbReference>
<organism>
    <name type="scientific">Vibrio cholerae serotype O1 (strain ATCC 39315 / El Tor Inaba N16961)</name>
    <dbReference type="NCBI Taxonomy" id="243277"/>
    <lineage>
        <taxon>Bacteria</taxon>
        <taxon>Pseudomonadati</taxon>
        <taxon>Pseudomonadota</taxon>
        <taxon>Gammaproteobacteria</taxon>
        <taxon>Vibrionales</taxon>
        <taxon>Vibrionaceae</taxon>
        <taxon>Vibrio</taxon>
    </lineage>
</organism>
<sequence>MALEFKDKWLEQFYEDDKRHRLIPSSIENALFRKLEILDAAQAESDLRIPPGNRFEHLEGNLKGWCSIRVNKQYRLIFQWVDGVALNTYLDPHKY</sequence>
<feature type="chain" id="PRO_0000278768" description="Toxin HigB-1">
    <location>
        <begin position="1"/>
        <end position="95"/>
    </location>
</feature>
<reference key="1">
    <citation type="journal article" date="2000" name="Nature">
        <title>DNA sequence of both chromosomes of the cholera pathogen Vibrio cholerae.</title>
        <authorList>
            <person name="Heidelberg J.F."/>
            <person name="Eisen J.A."/>
            <person name="Nelson W.C."/>
            <person name="Clayton R.A."/>
            <person name="Gwinn M.L."/>
            <person name="Dodson R.J."/>
            <person name="Haft D.H."/>
            <person name="Hickey E.K."/>
            <person name="Peterson J.D."/>
            <person name="Umayam L.A."/>
            <person name="Gill S.R."/>
            <person name="Nelson K.E."/>
            <person name="Read T.D."/>
            <person name="Tettelin H."/>
            <person name="Richardson D.L."/>
            <person name="Ermolaeva M.D."/>
            <person name="Vamathevan J.J."/>
            <person name="Bass S."/>
            <person name="Qin H."/>
            <person name="Dragoi I."/>
            <person name="Sellers P."/>
            <person name="McDonald L.A."/>
            <person name="Utterback T.R."/>
            <person name="Fleischmann R.D."/>
            <person name="Nierman W.C."/>
            <person name="White O."/>
            <person name="Salzberg S.L."/>
            <person name="Smith H.O."/>
            <person name="Colwell R.R."/>
            <person name="Mekalanos J.J."/>
            <person name="Venter J.C."/>
            <person name="Fraser C.M."/>
        </authorList>
    </citation>
    <scope>NUCLEOTIDE SEQUENCE [LARGE SCALE GENOMIC DNA]</scope>
    <source>
        <strain>ATCC 39315 / El Tor Inaba N16961</strain>
    </source>
</reference>
<reference key="2">
    <citation type="journal article" date="2006" name="Mol. Microbiol.">
        <title>Two higBA loci in the Vibrio cholerae superintegron encode mRNA cleaving enzymes and can stabilize plasmids.</title>
        <authorList>
            <person name="Christensen-Dalsgaard M."/>
            <person name="Gerdes K."/>
        </authorList>
    </citation>
    <scope>FUNCTION</scope>
    <scope>INDUCTION</scope>
    <source>
        <strain>ATCC 39315 / El Tor Inaba N16961</strain>
    </source>
</reference>
<reference key="3">
    <citation type="journal article" date="2007" name="J. Bacteriol.">
        <title>Characterization of a higBA toxin-antitoxin locus in Vibrio cholerae.</title>
        <authorList>
            <person name="Budde P.P."/>
            <person name="Davis B.M."/>
            <person name="Yuan J."/>
            <person name="Waldor M.K."/>
        </authorList>
    </citation>
    <scope>FUNCTION</scope>
    <scope>INDUCTION</scope>
    <scope>INTERACTION BETWEEN HIGA-1 AND HIGB-1</scope>
    <scope>CHARACTERIZATION OF THE TRANSCRIPTIONAL START SITE</scope>
    <source>
        <strain>ATCC 39315 / El Tor Inaba N16961</strain>
    </source>
</reference>
<evidence type="ECO:0000269" key="1">
    <source>
    </source>
</evidence>
<evidence type="ECO:0000269" key="2">
    <source>
    </source>
</evidence>
<evidence type="ECO:0000305" key="3"/>
<protein>
    <recommendedName>
        <fullName>Toxin HigB-1</fullName>
    </recommendedName>
</protein>